<accession>P28005</accession>
<accession>D6VPI5</accession>
<reference key="1">
    <citation type="journal article" date="1992" name="J. Mol. Biol.">
        <title>Molecular analysis of Saccharomyces cerevisiae chromosome I. On the number of genes and the identification of essential genes using temperature-sensitive-lethal mutations.</title>
        <authorList>
            <person name="Harris S.D."/>
            <person name="Cheng J."/>
            <person name="Pugh T.A."/>
            <person name="Pringle J.R."/>
        </authorList>
    </citation>
    <scope>NUCLEOTIDE SEQUENCE [GENOMIC DNA]</scope>
</reference>
<reference key="2">
    <citation type="journal article" date="1995" name="Proc. Natl. Acad. Sci. U.S.A.">
        <title>The nucleotide sequence of chromosome I from Saccharomyces cerevisiae.</title>
        <authorList>
            <person name="Bussey H."/>
            <person name="Kaback D.B."/>
            <person name="Zhong W.-W."/>
            <person name="Vo D.H."/>
            <person name="Clark M.W."/>
            <person name="Fortin N."/>
            <person name="Hall J."/>
            <person name="Ouellette B.F.F."/>
            <person name="Keng T."/>
            <person name="Barton A.B."/>
            <person name="Su Y."/>
            <person name="Davies C.J."/>
            <person name="Storms R.K."/>
        </authorList>
    </citation>
    <scope>NUCLEOTIDE SEQUENCE [LARGE SCALE GENOMIC DNA]</scope>
    <source>
        <strain>ATCC 204508 / S288c</strain>
    </source>
</reference>
<reference key="3">
    <citation type="journal article" date="2014" name="G3 (Bethesda)">
        <title>The reference genome sequence of Saccharomyces cerevisiae: Then and now.</title>
        <authorList>
            <person name="Engel S.R."/>
            <person name="Dietrich F.S."/>
            <person name="Fisk D.G."/>
            <person name="Binkley G."/>
            <person name="Balakrishnan R."/>
            <person name="Costanzo M.C."/>
            <person name="Dwight S.S."/>
            <person name="Hitz B.C."/>
            <person name="Karra K."/>
            <person name="Nash R.S."/>
            <person name="Weng S."/>
            <person name="Wong E.D."/>
            <person name="Lloyd P."/>
            <person name="Skrzypek M.S."/>
            <person name="Miyasato S.R."/>
            <person name="Simison M."/>
            <person name="Cherry J.M."/>
        </authorList>
    </citation>
    <scope>GENOME REANNOTATION</scope>
    <source>
        <strain>ATCC 204508 / S288c</strain>
    </source>
</reference>
<reference key="4">
    <citation type="journal article" date="1998" name="Genes Dev.">
        <title>Purification and characterization of the nuclear RNase P holoenzyme complex reveals extensive subunit overlap with RNase MRP.</title>
        <authorList>
            <person name="Chamberlain J.R."/>
            <person name="Lee Y."/>
            <person name="Lane W.S."/>
            <person name="Engelke D.R."/>
        </authorList>
    </citation>
    <scope>FUNCTION</scope>
    <scope>IDENTIFICATION IN THE RNASE P COMPLEX BY MASS SPECTROMETRY</scope>
</reference>
<reference key="5">
    <citation type="journal article" date="2003" name="Mol. Cell">
        <title>Assigning function to yeast proteins by integration of technologies.</title>
        <authorList>
            <person name="Hazbun T.R."/>
            <person name="Malmstroem L."/>
            <person name="Anderson S."/>
            <person name="Graczyk B.J."/>
            <person name="Fox B."/>
            <person name="Riffle M."/>
            <person name="Sundin B.A."/>
            <person name="Aranda J.D."/>
            <person name="McDonald W.H."/>
            <person name="Chiu C.-H."/>
            <person name="Snydsman B.E."/>
            <person name="Bradley P."/>
            <person name="Muller E.G.D."/>
            <person name="Fields S."/>
            <person name="Baker D."/>
            <person name="Yates J.R. III"/>
            <person name="Davis T.N."/>
        </authorList>
    </citation>
    <scope>IDENTIFICATION BY MASS SPECTROMETRY</scope>
</reference>
<reference key="6">
    <citation type="journal article" date="2003" name="Nature">
        <title>Global analysis of protein localization in budding yeast.</title>
        <authorList>
            <person name="Huh W.-K."/>
            <person name="Falvo J.V."/>
            <person name="Gerke L.C."/>
            <person name="Carroll A.S."/>
            <person name="Howson R.W."/>
            <person name="Weissman J.S."/>
            <person name="O'Shea E.K."/>
        </authorList>
    </citation>
    <scope>SUBCELLULAR LOCATION [LARGE SCALE ANALYSIS]</scope>
</reference>
<reference key="7">
    <citation type="journal article" date="2003" name="Nature">
        <title>Global analysis of protein expression in yeast.</title>
        <authorList>
            <person name="Ghaemmaghami S."/>
            <person name="Huh W.-K."/>
            <person name="Bower K."/>
            <person name="Howson R.W."/>
            <person name="Belle A."/>
            <person name="Dephoure N."/>
            <person name="O'Shea E.K."/>
            <person name="Weissman J.S."/>
        </authorList>
    </citation>
    <scope>LEVEL OF PROTEIN EXPRESSION [LARGE SCALE ANALYSIS]</scope>
</reference>
<reference key="8">
    <citation type="journal article" date="2005" name="J. Biol. Chem.">
        <title>Characterization and purification of Saccharomyces cerevisiae RNase MRP reveals a new unique protein component.</title>
        <authorList>
            <person name="Salinas K."/>
            <person name="Wierzbicki S."/>
            <person name="Zhou L."/>
            <person name="Schmitt M.E."/>
        </authorList>
    </citation>
    <scope>IDENTIFICATION IN THE RNASE MRP COMPLEX BY MASS SPECTROMETRY</scope>
</reference>
<organism>
    <name type="scientific">Saccharomyces cerevisiae (strain ATCC 204508 / S288c)</name>
    <name type="common">Baker's yeast</name>
    <dbReference type="NCBI Taxonomy" id="559292"/>
    <lineage>
        <taxon>Eukaryota</taxon>
        <taxon>Fungi</taxon>
        <taxon>Dikarya</taxon>
        <taxon>Ascomycota</taxon>
        <taxon>Saccharomycotina</taxon>
        <taxon>Saccharomycetes</taxon>
        <taxon>Saccharomycetales</taxon>
        <taxon>Saccharomycetaceae</taxon>
        <taxon>Saccharomyces</taxon>
    </lineage>
</organism>
<dbReference type="EC" id="3.1.26.5"/>
<dbReference type="EMBL" id="X62577">
    <property type="protein sequence ID" value="CAA44457.1"/>
    <property type="molecule type" value="Genomic_DNA"/>
</dbReference>
<dbReference type="EMBL" id="U12980">
    <property type="protein sequence ID" value="AAC04999.1"/>
    <property type="molecule type" value="Genomic_DNA"/>
</dbReference>
<dbReference type="EMBL" id="BK006935">
    <property type="protein sequence ID" value="DAA06955.1"/>
    <property type="molecule type" value="Genomic_DNA"/>
</dbReference>
<dbReference type="PIR" id="S23411">
    <property type="entry name" value="S23411"/>
</dbReference>
<dbReference type="RefSeq" id="NP_009369.1">
    <property type="nucleotide sequence ID" value="NM_001178178.1"/>
</dbReference>
<dbReference type="PDB" id="6AGB">
    <property type="method" value="EM"/>
    <property type="resolution" value="3.48 A"/>
    <property type="chains" value="E=1-173"/>
</dbReference>
<dbReference type="PDB" id="6AH3">
    <property type="method" value="EM"/>
    <property type="resolution" value="3.48 A"/>
    <property type="chains" value="E=1-173"/>
</dbReference>
<dbReference type="PDB" id="6W6V">
    <property type="method" value="EM"/>
    <property type="resolution" value="3.00 A"/>
    <property type="chains" value="E=1-173"/>
</dbReference>
<dbReference type="PDB" id="7C79">
    <property type="method" value="EM"/>
    <property type="resolution" value="2.50 A"/>
    <property type="chains" value="E=1-173"/>
</dbReference>
<dbReference type="PDB" id="7C7A">
    <property type="method" value="EM"/>
    <property type="resolution" value="2.80 A"/>
    <property type="chains" value="E=1-173"/>
</dbReference>
<dbReference type="PDBsum" id="6AGB"/>
<dbReference type="PDBsum" id="6AH3"/>
<dbReference type="PDBsum" id="6W6V"/>
<dbReference type="PDBsum" id="7C79"/>
<dbReference type="PDBsum" id="7C7A"/>
<dbReference type="EMDB" id="EMD-21564"/>
<dbReference type="EMDB" id="EMD-30296"/>
<dbReference type="EMDB" id="EMD-30297"/>
<dbReference type="EMDB" id="EMD-9616"/>
<dbReference type="EMDB" id="EMD-9622"/>
<dbReference type="SMR" id="P28005"/>
<dbReference type="BioGRID" id="31733">
    <property type="interactions" value="136"/>
</dbReference>
<dbReference type="ComplexPortal" id="CPX-1873">
    <property type="entry name" value="Nucleolar ribonuclease P complex"/>
</dbReference>
<dbReference type="ComplexPortal" id="CPX-3284">
    <property type="entry name" value="Nucleolar ribonuclease MRP complex"/>
</dbReference>
<dbReference type="DIP" id="DIP-3789N"/>
<dbReference type="FunCoup" id="P28005">
    <property type="interactions" value="372"/>
</dbReference>
<dbReference type="IntAct" id="P28005">
    <property type="interactions" value="17"/>
</dbReference>
<dbReference type="MINT" id="P28005"/>
<dbReference type="STRING" id="4932.YAL033W"/>
<dbReference type="iPTMnet" id="P28005"/>
<dbReference type="PaxDb" id="4932-YAL033W"/>
<dbReference type="PeptideAtlas" id="P28005"/>
<dbReference type="EnsemblFungi" id="YAL033W_mRNA">
    <property type="protein sequence ID" value="YAL033W"/>
    <property type="gene ID" value="YAL033W"/>
</dbReference>
<dbReference type="GeneID" id="851200"/>
<dbReference type="KEGG" id="sce:YAL033W"/>
<dbReference type="AGR" id="SGD:S000000031"/>
<dbReference type="SGD" id="S000000031">
    <property type="gene designation" value="POP5"/>
</dbReference>
<dbReference type="VEuPathDB" id="FungiDB:YAL033W"/>
<dbReference type="eggNOG" id="KOG4639">
    <property type="taxonomic scope" value="Eukaryota"/>
</dbReference>
<dbReference type="GeneTree" id="ENSGT00970000196581"/>
<dbReference type="HOGENOM" id="CLU_086710_1_2_1"/>
<dbReference type="InParanoid" id="P28005"/>
<dbReference type="OMA" id="MQNYLDK"/>
<dbReference type="OrthoDB" id="24745at2759"/>
<dbReference type="BioCyc" id="YEAST:YAL033W-MONOMER"/>
<dbReference type="BioGRID-ORCS" id="851200">
    <property type="hits" value="3 hits in 10 CRISPR screens"/>
</dbReference>
<dbReference type="CD-CODE" id="7CAF9006">
    <property type="entry name" value="Tam body"/>
</dbReference>
<dbReference type="PRO" id="PR:P28005"/>
<dbReference type="Proteomes" id="UP000002311">
    <property type="component" value="Chromosome I"/>
</dbReference>
<dbReference type="RNAct" id="P28005">
    <property type="molecule type" value="protein"/>
</dbReference>
<dbReference type="GO" id="GO:0005737">
    <property type="term" value="C:cytoplasm"/>
    <property type="evidence" value="ECO:0007669"/>
    <property type="project" value="UniProtKB-SubCell"/>
</dbReference>
<dbReference type="GO" id="GO:0005655">
    <property type="term" value="C:nucleolar ribonuclease P complex"/>
    <property type="evidence" value="ECO:0000314"/>
    <property type="project" value="SGD"/>
</dbReference>
<dbReference type="GO" id="GO:0000172">
    <property type="term" value="C:ribonuclease MRP complex"/>
    <property type="evidence" value="ECO:0000314"/>
    <property type="project" value="MGI"/>
</dbReference>
<dbReference type="GO" id="GO:0000171">
    <property type="term" value="F:ribonuclease MRP activity"/>
    <property type="evidence" value="ECO:0000314"/>
    <property type="project" value="MGI"/>
</dbReference>
<dbReference type="GO" id="GO:0004526">
    <property type="term" value="F:ribonuclease P activity"/>
    <property type="evidence" value="ECO:0007669"/>
    <property type="project" value="UniProtKB-EC"/>
</dbReference>
<dbReference type="GO" id="GO:0033204">
    <property type="term" value="F:ribonuclease P RNA binding"/>
    <property type="evidence" value="ECO:0007669"/>
    <property type="project" value="InterPro"/>
</dbReference>
<dbReference type="GO" id="GO:0003723">
    <property type="term" value="F:RNA binding"/>
    <property type="evidence" value="ECO:0000314"/>
    <property type="project" value="SGD"/>
</dbReference>
<dbReference type="GO" id="GO:0034965">
    <property type="term" value="P:intronic box C/D snoRNA processing"/>
    <property type="evidence" value="ECO:0000314"/>
    <property type="project" value="SGD"/>
</dbReference>
<dbReference type="GO" id="GO:0000460">
    <property type="term" value="P:maturation of 5.8S rRNA"/>
    <property type="evidence" value="ECO:0000314"/>
    <property type="project" value="ComplexPortal"/>
</dbReference>
<dbReference type="GO" id="GO:0000294">
    <property type="term" value="P:nuclear-transcribed mRNA catabolic process, RNase MRP-dependent"/>
    <property type="evidence" value="ECO:0000314"/>
    <property type="project" value="SGD"/>
</dbReference>
<dbReference type="GO" id="GO:0006364">
    <property type="term" value="P:rRNA processing"/>
    <property type="evidence" value="ECO:0000314"/>
    <property type="project" value="MGI"/>
</dbReference>
<dbReference type="GO" id="GO:0001682">
    <property type="term" value="P:tRNA 5'-leader removal"/>
    <property type="evidence" value="ECO:0000314"/>
    <property type="project" value="ComplexPortal"/>
</dbReference>
<dbReference type="GO" id="GO:0008033">
    <property type="term" value="P:tRNA processing"/>
    <property type="evidence" value="ECO:0000315"/>
    <property type="project" value="SGD"/>
</dbReference>
<dbReference type="FunFam" id="3.30.70.3250:FF:000004">
    <property type="entry name" value="Ribonuclease P/MRP protein subunit POP5"/>
    <property type="match status" value="1"/>
</dbReference>
<dbReference type="Gene3D" id="3.30.70.3250">
    <property type="entry name" value="Ribonuclease P, Pop5 subunit"/>
    <property type="match status" value="1"/>
</dbReference>
<dbReference type="InterPro" id="IPR002759">
    <property type="entry name" value="Pop5/Rpp14/Rnp2-like"/>
</dbReference>
<dbReference type="InterPro" id="IPR016819">
    <property type="entry name" value="RNase_P/MRP_POP5"/>
</dbReference>
<dbReference type="InterPro" id="IPR038085">
    <property type="entry name" value="Rnp2-like_sf"/>
</dbReference>
<dbReference type="PANTHER" id="PTHR48414">
    <property type="entry name" value="POP5 HOMOLOG, RIBONUCLEASE P_MRP SUBUNIT"/>
    <property type="match status" value="1"/>
</dbReference>
<dbReference type="PANTHER" id="PTHR48414:SF1">
    <property type="entry name" value="POP5 HOMOLOG, RIBONUCLEASE P_MRP SUBUNIT"/>
    <property type="match status" value="1"/>
</dbReference>
<dbReference type="Pfam" id="PF01900">
    <property type="entry name" value="RNase_P_Rpp14"/>
    <property type="match status" value="1"/>
</dbReference>
<dbReference type="PIRSF" id="PIRSF023803">
    <property type="entry name" value="Ribonuclease_P_prd"/>
    <property type="match status" value="1"/>
</dbReference>
<dbReference type="SUPFAM" id="SSF160350">
    <property type="entry name" value="Rnp2-like"/>
    <property type="match status" value="1"/>
</dbReference>
<sequence length="173" mass="19574">MVRLKSRYILFEIIFPPTDTNVEESVSKADILLSHHRASPADVSIKSILQEIRRSLSLNLGDYGSAKCNSLLQLKYFSNKTSTGIIRCHREDCDLVIMALMLMSKIGDVDGLIVNPVKVSGTIKKIEQFAMRRNSKILNIIKCSQSSHLSDNDFIINDFKKIGRENENENEDD</sequence>
<gene>
    <name type="primary">POP5</name>
    <name type="ordered locus">YAL033W</name>
    <name type="ORF">FUN53</name>
</gene>
<name>POP5_YEAST</name>
<proteinExistence type="evidence at protein level"/>
<feature type="chain" id="PRO_0000140015" description="Ribonuclease P/MRP protein subunit POP5">
    <location>
        <begin position="1"/>
        <end position="173"/>
    </location>
</feature>
<feature type="strand" evidence="7">
    <location>
        <begin position="6"/>
        <end position="14"/>
    </location>
</feature>
<feature type="strand" evidence="7">
    <location>
        <begin position="20"/>
        <end position="22"/>
    </location>
</feature>
<feature type="helix" evidence="7">
    <location>
        <begin position="28"/>
        <end position="35"/>
    </location>
</feature>
<feature type="helix" evidence="7">
    <location>
        <begin position="45"/>
        <end position="59"/>
    </location>
</feature>
<feature type="helix" evidence="7">
    <location>
        <begin position="63"/>
        <end position="66"/>
    </location>
</feature>
<feature type="turn" evidence="7">
    <location>
        <begin position="67"/>
        <end position="70"/>
    </location>
</feature>
<feature type="strand" evidence="7">
    <location>
        <begin position="73"/>
        <end position="78"/>
    </location>
</feature>
<feature type="turn" evidence="7">
    <location>
        <begin position="79"/>
        <end position="82"/>
    </location>
</feature>
<feature type="strand" evidence="7">
    <location>
        <begin position="83"/>
        <end position="92"/>
    </location>
</feature>
<feature type="helix" evidence="7">
    <location>
        <begin position="93"/>
        <end position="101"/>
    </location>
</feature>
<feature type="strand" evidence="7">
    <location>
        <begin position="113"/>
        <end position="121"/>
    </location>
</feature>
<feature type="helix" evidence="7">
    <location>
        <begin position="123"/>
        <end position="145"/>
    </location>
</feature>
<feature type="helix" evidence="6">
    <location>
        <begin position="147"/>
        <end position="150"/>
    </location>
</feature>
<feature type="helix" evidence="6">
    <location>
        <begin position="156"/>
        <end position="161"/>
    </location>
</feature>
<feature type="strand" evidence="6">
    <location>
        <begin position="163"/>
        <end position="166"/>
    </location>
</feature>
<comment type="function">
    <text evidence="4">Component of ribonuclease P, a protein complex that generates mature tRNA molecules by cleaving their 5'-ends. Also a component of RNase MRP, which cleaves pre-rRNA sequences.</text>
</comment>
<comment type="catalytic activity">
    <reaction>
        <text>Endonucleolytic cleavage of RNA, removing 5'-extranucleotides from tRNA precursor.</text>
        <dbReference type="EC" id="3.1.26.5"/>
    </reaction>
</comment>
<comment type="subunit">
    <text evidence="3 4">Component of nuclear RNase P and RNase MRP complexes. RNase P consists of an RNA moiety and at least 9 protein subunits including POP1, POP3, POP4, POP5, POP6, POP7, POP8, RPP1 and RPR2. RNase MRP complex consists of an RNA moiety and at least 10 protein subunits including POP1, POP3, POP4, POP5, POP6, POP7, POP8, RMP1, RPP1 and SNM1, many of which are shared with the RNase P complex.</text>
</comment>
<comment type="interaction">
    <interactant intactId="EBI-13654">
        <id>P28005</id>
    </interactant>
    <interactant intactId="EBI-13646">
        <id>P38336</id>
        <label>POP4</label>
    </interactant>
    <organismsDiffer>false</organismsDiffer>
    <experiments>3</experiments>
</comment>
<comment type="interaction">
    <interactant intactId="EBI-13654">
        <id>P28005</id>
    </interactant>
    <interactant intactId="EBI-13662">
        <id>P53218</id>
        <label>POP6</label>
    </interactant>
    <organismsDiffer>false</organismsDiffer>
    <experiments>3</experiments>
</comment>
<comment type="subcellular location">
    <subcellularLocation>
        <location evidence="1">Cytoplasm</location>
    </subcellularLocation>
    <subcellularLocation>
        <location evidence="1">Nucleus</location>
    </subcellularLocation>
</comment>
<comment type="miscellaneous">
    <text evidence="2">Present with 2230 molecules/cell in log phase SD medium.</text>
</comment>
<comment type="similarity">
    <text evidence="5">Belongs to the eukaryotic/archaeal RNase P protein component 2 family.</text>
</comment>
<protein>
    <recommendedName>
        <fullName>Ribonuclease P/MRP protein subunit POP5</fullName>
        <ecNumber>3.1.26.5</ecNumber>
    </recommendedName>
    <alternativeName>
        <fullName>RNA-processing protein POP5</fullName>
    </alternativeName>
    <alternativeName>
        <fullName>RNase P/MRP 19.6 kDa subunit</fullName>
    </alternativeName>
</protein>
<evidence type="ECO:0000269" key="1">
    <source>
    </source>
</evidence>
<evidence type="ECO:0000269" key="2">
    <source>
    </source>
</evidence>
<evidence type="ECO:0000269" key="3">
    <source>
    </source>
</evidence>
<evidence type="ECO:0000269" key="4">
    <source>
    </source>
</evidence>
<evidence type="ECO:0000305" key="5"/>
<evidence type="ECO:0007829" key="6">
    <source>
        <dbReference type="PDB" id="6W6V"/>
    </source>
</evidence>
<evidence type="ECO:0007829" key="7">
    <source>
        <dbReference type="PDB" id="7C79"/>
    </source>
</evidence>
<keyword id="KW-0002">3D-structure</keyword>
<keyword id="KW-0963">Cytoplasm</keyword>
<keyword id="KW-0378">Hydrolase</keyword>
<keyword id="KW-0539">Nucleus</keyword>
<keyword id="KW-1185">Reference proteome</keyword>
<keyword id="KW-0698">rRNA processing</keyword>
<keyword id="KW-0819">tRNA processing</keyword>